<dbReference type="EMBL" id="DQ648794">
    <property type="protein sequence ID" value="ABG47053.1"/>
    <property type="molecule type" value="Genomic_RNA"/>
</dbReference>
<dbReference type="Proteomes" id="UP000007449">
    <property type="component" value="Genome"/>
</dbReference>
<protein>
    <recommendedName>
        <fullName>Non-structural protein 3a</fullName>
        <shortName>ns3a</shortName>
    </recommendedName>
    <alternativeName>
        <fullName>Accessory protein 3a</fullName>
    </alternativeName>
</protein>
<reference key="1">
    <citation type="journal article" date="2006" name="J. Virol.">
        <title>Prevalence and genetic diversity of coronaviruses in bats from China.</title>
        <authorList>
            <person name="Tang X.C."/>
            <person name="Zhang J.X."/>
            <person name="Zhang S.Y."/>
            <person name="Wang P."/>
            <person name="Fan X.H."/>
            <person name="Li L.F."/>
            <person name="Li G."/>
            <person name="Dong B.Q."/>
            <person name="Liu W."/>
            <person name="Cheung C.L."/>
            <person name="Xu K.M."/>
            <person name="Song W.J."/>
            <person name="Vijaykrishna D."/>
            <person name="Poon L.L.M."/>
            <person name="Peiris J.S.M."/>
            <person name="Smith G.J."/>
            <person name="Chen H."/>
            <person name="Guan Y."/>
        </authorList>
    </citation>
    <scope>NUCLEOTIDE SEQUENCE [GENOMIC RNA]</scope>
</reference>
<keyword id="KW-0732">Signal</keyword>
<name>NS3A_BC133</name>
<feature type="signal peptide" evidence="1">
    <location>
        <begin position="1"/>
        <end position="19"/>
    </location>
</feature>
<feature type="chain" id="PRO_0000290261" description="Non-structural protein 3a">
    <location>
        <begin position="20"/>
        <end position="91"/>
    </location>
</feature>
<organismHost>
    <name type="scientific">Tylonycteris pachypus</name>
    <name type="common">Lesser bamboo bat</name>
    <name type="synonym">Vespertilio pachypus</name>
    <dbReference type="NCBI Taxonomy" id="258959"/>
</organismHost>
<evidence type="ECO:0000255" key="1"/>
<organism>
    <name type="scientific">Bat coronavirus 133/2005</name>
    <name type="common">BtCoV</name>
    <name type="synonym">BtCoV/133/2005</name>
    <dbReference type="NCBI Taxonomy" id="389230"/>
    <lineage>
        <taxon>Viruses</taxon>
        <taxon>Riboviria</taxon>
        <taxon>Orthornavirae</taxon>
        <taxon>Pisuviricota</taxon>
        <taxon>Pisoniviricetes</taxon>
        <taxon>Nidovirales</taxon>
        <taxon>Cornidovirineae</taxon>
        <taxon>Coronaviridae</taxon>
        <taxon>Orthocoronavirinae</taxon>
        <taxon>Betacoronavirus</taxon>
        <taxon>Merbecovirus</taxon>
        <taxon>Bat coronavirus HKU4</taxon>
    </lineage>
</organism>
<proteinExistence type="inferred from homology"/>
<gene>
    <name type="ORF">3a</name>
</gene>
<accession>Q0Q4F1</accession>
<sequence>MVSFNATAILLVLVANAFSKPLYVPEHCVGMSGTLFQACIRQTMVDTTGMYTNSAMSYDGTTIPFDRDGIVHQDHYTDTKPTPLSDVGFSV</sequence>